<evidence type="ECO:0000255" key="1">
    <source>
        <dbReference type="HAMAP-Rule" id="MF_00636"/>
    </source>
</evidence>
<comment type="function">
    <text evidence="1">Displays ATPase and GTPase activities.</text>
</comment>
<comment type="similarity">
    <text evidence="1">Belongs to the RapZ-like family.</text>
</comment>
<name>Y3199_BACVZ</name>
<reference key="1">
    <citation type="journal article" date="2007" name="Nat. Biotechnol.">
        <title>Comparative analysis of the complete genome sequence of the plant growth-promoting bacterium Bacillus amyloliquefaciens FZB42.</title>
        <authorList>
            <person name="Chen X.H."/>
            <person name="Koumoutsi A."/>
            <person name="Scholz R."/>
            <person name="Eisenreich A."/>
            <person name="Schneider K."/>
            <person name="Heinemeyer I."/>
            <person name="Morgenstern B."/>
            <person name="Voss B."/>
            <person name="Hess W.R."/>
            <person name="Reva O."/>
            <person name="Junge H."/>
            <person name="Voigt B."/>
            <person name="Jungblut P.R."/>
            <person name="Vater J."/>
            <person name="Suessmuth R."/>
            <person name="Liesegang H."/>
            <person name="Strittmatter A."/>
            <person name="Gottschalk G."/>
            <person name="Borriss R."/>
        </authorList>
    </citation>
    <scope>NUCLEOTIDE SEQUENCE [LARGE SCALE GENOMIC DNA]</scope>
    <source>
        <strain>DSM 23117 / BGSC 10A6 / LMG 26770 / FZB42</strain>
    </source>
</reference>
<protein>
    <recommendedName>
        <fullName evidence="1">Nucleotide-binding protein RBAM_031990</fullName>
    </recommendedName>
</protein>
<sequence length="295" mass="33839">MSMNENHDIQLVIITGMSGAGKTVAIQSFEDLGYFCVDNLPPSLLPKFLELMKESSSKMSKVALVMDLRGREFFDRLIEALDEMAENPWITPRILFLDAKDSILVTRYKETRRSHPLAATGLPLEGIALERQLLEELKGRSQLIYDTSDMKPRDLREKIVAHFATNQGETFTVNVMSFGFKYGLPIDADLVFDVRFLPNPFYIESMRPLTGKDEEVSSYVMKWNETQKFIEKLVDLLGFMLPSYKREGKSQLVIAIGCTGGQHRSVTLAEYLADYFKKDFYTHVTHRDIEKRSRK</sequence>
<feature type="chain" id="PRO_1000082653" description="Nucleotide-binding protein RBAM_031990">
    <location>
        <begin position="1"/>
        <end position="295"/>
    </location>
</feature>
<feature type="binding site" evidence="1">
    <location>
        <begin position="16"/>
        <end position="23"/>
    </location>
    <ligand>
        <name>ATP</name>
        <dbReference type="ChEBI" id="CHEBI:30616"/>
    </ligand>
</feature>
<feature type="binding site" evidence="1">
    <location>
        <begin position="67"/>
        <end position="70"/>
    </location>
    <ligand>
        <name>GTP</name>
        <dbReference type="ChEBI" id="CHEBI:37565"/>
    </ligand>
</feature>
<dbReference type="EMBL" id="CP000560">
    <property type="protein sequence ID" value="ABS75529.1"/>
    <property type="molecule type" value="Genomic_DNA"/>
</dbReference>
<dbReference type="SMR" id="A7Z953"/>
<dbReference type="GeneID" id="93082344"/>
<dbReference type="KEGG" id="bay:RBAM_031990"/>
<dbReference type="HOGENOM" id="CLU_059558_0_0_9"/>
<dbReference type="Proteomes" id="UP000001120">
    <property type="component" value="Chromosome"/>
</dbReference>
<dbReference type="GO" id="GO:0005524">
    <property type="term" value="F:ATP binding"/>
    <property type="evidence" value="ECO:0007669"/>
    <property type="project" value="UniProtKB-UniRule"/>
</dbReference>
<dbReference type="GO" id="GO:0005525">
    <property type="term" value="F:GTP binding"/>
    <property type="evidence" value="ECO:0007669"/>
    <property type="project" value="UniProtKB-UniRule"/>
</dbReference>
<dbReference type="HAMAP" id="MF_00636">
    <property type="entry name" value="RapZ_like"/>
    <property type="match status" value="1"/>
</dbReference>
<dbReference type="InterPro" id="IPR027417">
    <property type="entry name" value="P-loop_NTPase"/>
</dbReference>
<dbReference type="InterPro" id="IPR005337">
    <property type="entry name" value="RapZ-like"/>
</dbReference>
<dbReference type="InterPro" id="IPR053930">
    <property type="entry name" value="RapZ-like_N"/>
</dbReference>
<dbReference type="InterPro" id="IPR053931">
    <property type="entry name" value="RapZ_C"/>
</dbReference>
<dbReference type="NCBIfam" id="NF003828">
    <property type="entry name" value="PRK05416.1"/>
    <property type="match status" value="1"/>
</dbReference>
<dbReference type="PANTHER" id="PTHR30448">
    <property type="entry name" value="RNASE ADAPTER PROTEIN RAPZ"/>
    <property type="match status" value="1"/>
</dbReference>
<dbReference type="PANTHER" id="PTHR30448:SF0">
    <property type="entry name" value="RNASE ADAPTER PROTEIN RAPZ"/>
    <property type="match status" value="1"/>
</dbReference>
<dbReference type="Pfam" id="PF22740">
    <property type="entry name" value="PapZ_C"/>
    <property type="match status" value="1"/>
</dbReference>
<dbReference type="Pfam" id="PF03668">
    <property type="entry name" value="RapZ-like_N"/>
    <property type="match status" value="1"/>
</dbReference>
<dbReference type="PIRSF" id="PIRSF005052">
    <property type="entry name" value="P-loopkin"/>
    <property type="match status" value="1"/>
</dbReference>
<dbReference type="SUPFAM" id="SSF52540">
    <property type="entry name" value="P-loop containing nucleoside triphosphate hydrolases"/>
    <property type="match status" value="1"/>
</dbReference>
<accession>A7Z953</accession>
<proteinExistence type="inferred from homology"/>
<keyword id="KW-0067">ATP-binding</keyword>
<keyword id="KW-0342">GTP-binding</keyword>
<keyword id="KW-0547">Nucleotide-binding</keyword>
<gene>
    <name type="ordered locus">RBAM_031990</name>
</gene>
<organism>
    <name type="scientific">Bacillus velezensis (strain DSM 23117 / BGSC 10A6 / LMG 26770 / FZB42)</name>
    <name type="common">Bacillus amyloliquefaciens subsp. plantarum</name>
    <dbReference type="NCBI Taxonomy" id="326423"/>
    <lineage>
        <taxon>Bacteria</taxon>
        <taxon>Bacillati</taxon>
        <taxon>Bacillota</taxon>
        <taxon>Bacilli</taxon>
        <taxon>Bacillales</taxon>
        <taxon>Bacillaceae</taxon>
        <taxon>Bacillus</taxon>
        <taxon>Bacillus amyloliquefaciens group</taxon>
    </lineage>
</organism>